<feature type="chain" id="PRO_0000172611" description="Phosphatidylglycerol--prolipoprotein diacylglyceryl transferase">
    <location>
        <begin position="1"/>
        <end position="292"/>
    </location>
</feature>
<feature type="transmembrane region" description="Helical" evidence="1">
    <location>
        <begin position="24"/>
        <end position="44"/>
    </location>
</feature>
<feature type="transmembrane region" description="Helical" evidence="1">
    <location>
        <begin position="65"/>
        <end position="85"/>
    </location>
</feature>
<feature type="transmembrane region" description="Helical" evidence="1">
    <location>
        <begin position="110"/>
        <end position="130"/>
    </location>
</feature>
<feature type="transmembrane region" description="Helical" evidence="1">
    <location>
        <begin position="136"/>
        <end position="156"/>
    </location>
</feature>
<feature type="transmembrane region" description="Helical" evidence="1">
    <location>
        <begin position="192"/>
        <end position="212"/>
    </location>
</feature>
<feature type="transmembrane region" description="Helical" evidence="1">
    <location>
        <begin position="219"/>
        <end position="239"/>
    </location>
</feature>
<feature type="transmembrane region" description="Helical" evidence="1">
    <location>
        <begin position="256"/>
        <end position="276"/>
    </location>
</feature>
<feature type="binding site" evidence="1">
    <location>
        <position position="157"/>
    </location>
    <ligand>
        <name>a 1,2-diacyl-sn-glycero-3-phospho-(1'-sn-glycerol)</name>
        <dbReference type="ChEBI" id="CHEBI:64716"/>
    </ligand>
</feature>
<comment type="function">
    <text evidence="1">Catalyzes the transfer of the diacylglyceryl group from phosphatidylglycerol to the sulfhydryl group of the N-terminal cysteine of a prolipoprotein, the first step in the formation of mature lipoproteins.</text>
</comment>
<comment type="catalytic activity">
    <reaction evidence="1">
        <text>L-cysteinyl-[prolipoprotein] + a 1,2-diacyl-sn-glycero-3-phospho-(1'-sn-glycerol) = an S-1,2-diacyl-sn-glyceryl-L-cysteinyl-[prolipoprotein] + sn-glycerol 1-phosphate + H(+)</text>
        <dbReference type="Rhea" id="RHEA:56712"/>
        <dbReference type="Rhea" id="RHEA-COMP:14679"/>
        <dbReference type="Rhea" id="RHEA-COMP:14680"/>
        <dbReference type="ChEBI" id="CHEBI:15378"/>
        <dbReference type="ChEBI" id="CHEBI:29950"/>
        <dbReference type="ChEBI" id="CHEBI:57685"/>
        <dbReference type="ChEBI" id="CHEBI:64716"/>
        <dbReference type="ChEBI" id="CHEBI:140658"/>
        <dbReference type="EC" id="2.5.1.145"/>
    </reaction>
</comment>
<comment type="pathway">
    <text evidence="1">Protein modification; lipoprotein biosynthesis (diacylglyceryl transfer).</text>
</comment>
<comment type="subcellular location">
    <subcellularLocation>
        <location evidence="1">Cell inner membrane</location>
        <topology evidence="1">Multi-pass membrane protein</topology>
    </subcellularLocation>
</comment>
<comment type="similarity">
    <text evidence="1">Belongs to the Lgt family.</text>
</comment>
<name>LGT_HELHP</name>
<organism>
    <name type="scientific">Helicobacter hepaticus (strain ATCC 51449 / 3B1)</name>
    <dbReference type="NCBI Taxonomy" id="235279"/>
    <lineage>
        <taxon>Bacteria</taxon>
        <taxon>Pseudomonadati</taxon>
        <taxon>Campylobacterota</taxon>
        <taxon>Epsilonproteobacteria</taxon>
        <taxon>Campylobacterales</taxon>
        <taxon>Helicobacteraceae</taxon>
        <taxon>Helicobacter</taxon>
    </lineage>
</organism>
<gene>
    <name evidence="1" type="primary">lgt</name>
    <name type="ordered locus">HH_0510</name>
</gene>
<evidence type="ECO:0000255" key="1">
    <source>
        <dbReference type="HAMAP-Rule" id="MF_01147"/>
    </source>
</evidence>
<sequence length="292" mass="33710">METYSVWNRIYDYINPIAFKIFDISVHWYGIMYVSAMLIALLIAKAFITYRNERFPITQELLDSFFIWVEIGVILGGRIGYVLIYSPNRWEYLMQPWQMFNPYTNGVFVGISGFSYHGAMAGFVLAAIIFCYVKKQSFWIFMDLSAISIPLGYVFGRIGNFFNHELFGRVIESDSSLRDIGILVNGELRYPSQLFEAFAEGIIVFILLICLLRYAKKPGTLLVAYGVFYALARFVCEYFREADSQMGYFVFGLSMGQILSLVMLVISIFLGLFVFVQKPISSQKIKHQRKKK</sequence>
<keyword id="KW-0997">Cell inner membrane</keyword>
<keyword id="KW-1003">Cell membrane</keyword>
<keyword id="KW-0472">Membrane</keyword>
<keyword id="KW-1185">Reference proteome</keyword>
<keyword id="KW-0808">Transferase</keyword>
<keyword id="KW-0812">Transmembrane</keyword>
<keyword id="KW-1133">Transmembrane helix</keyword>
<reference key="1">
    <citation type="journal article" date="2003" name="Proc. Natl. Acad. Sci. U.S.A.">
        <title>The complete genome sequence of the carcinogenic bacterium Helicobacter hepaticus.</title>
        <authorList>
            <person name="Suerbaum S."/>
            <person name="Josenhans C."/>
            <person name="Sterzenbach T."/>
            <person name="Drescher B."/>
            <person name="Brandt P."/>
            <person name="Bell M."/>
            <person name="Droege M."/>
            <person name="Fartmann B."/>
            <person name="Fischer H.-P."/>
            <person name="Ge Z."/>
            <person name="Hoerster A."/>
            <person name="Holland R."/>
            <person name="Klein K."/>
            <person name="Koenig J."/>
            <person name="Macko L."/>
            <person name="Mendz G.L."/>
            <person name="Nyakatura G."/>
            <person name="Schauer D.B."/>
            <person name="Shen Z."/>
            <person name="Weber J."/>
            <person name="Frosch M."/>
            <person name="Fox J.G."/>
        </authorList>
    </citation>
    <scope>NUCLEOTIDE SEQUENCE [LARGE SCALE GENOMIC DNA]</scope>
    <source>
        <strain>ATCC 51449 / 3B1</strain>
    </source>
</reference>
<accession>Q7VIU4</accession>
<proteinExistence type="inferred from homology"/>
<protein>
    <recommendedName>
        <fullName evidence="1">Phosphatidylglycerol--prolipoprotein diacylglyceryl transferase</fullName>
        <ecNumber evidence="1">2.5.1.145</ecNumber>
    </recommendedName>
</protein>
<dbReference type="EC" id="2.5.1.145" evidence="1"/>
<dbReference type="EMBL" id="AE017125">
    <property type="protein sequence ID" value="AAP77107.1"/>
    <property type="molecule type" value="Genomic_DNA"/>
</dbReference>
<dbReference type="RefSeq" id="WP_011115352.1">
    <property type="nucleotide sequence ID" value="NC_004917.1"/>
</dbReference>
<dbReference type="SMR" id="Q7VIU4"/>
<dbReference type="STRING" id="235279.HH_0510"/>
<dbReference type="KEGG" id="hhe:HH_0510"/>
<dbReference type="eggNOG" id="COG0682">
    <property type="taxonomic scope" value="Bacteria"/>
</dbReference>
<dbReference type="HOGENOM" id="CLU_013386_1_0_7"/>
<dbReference type="OrthoDB" id="871140at2"/>
<dbReference type="UniPathway" id="UPA00664"/>
<dbReference type="Proteomes" id="UP000002495">
    <property type="component" value="Chromosome"/>
</dbReference>
<dbReference type="GO" id="GO:0005886">
    <property type="term" value="C:plasma membrane"/>
    <property type="evidence" value="ECO:0007669"/>
    <property type="project" value="UniProtKB-SubCell"/>
</dbReference>
<dbReference type="GO" id="GO:0008961">
    <property type="term" value="F:phosphatidylglycerol-prolipoprotein diacylglyceryl transferase activity"/>
    <property type="evidence" value="ECO:0007669"/>
    <property type="project" value="UniProtKB-UniRule"/>
</dbReference>
<dbReference type="GO" id="GO:0042158">
    <property type="term" value="P:lipoprotein biosynthetic process"/>
    <property type="evidence" value="ECO:0007669"/>
    <property type="project" value="UniProtKB-UniRule"/>
</dbReference>
<dbReference type="HAMAP" id="MF_01147">
    <property type="entry name" value="Lgt"/>
    <property type="match status" value="1"/>
</dbReference>
<dbReference type="InterPro" id="IPR001640">
    <property type="entry name" value="Lgt"/>
</dbReference>
<dbReference type="NCBIfam" id="TIGR00544">
    <property type="entry name" value="lgt"/>
    <property type="match status" value="1"/>
</dbReference>
<dbReference type="PANTHER" id="PTHR30589:SF0">
    <property type="entry name" value="PHOSPHATIDYLGLYCEROL--PROLIPOPROTEIN DIACYLGLYCERYL TRANSFERASE"/>
    <property type="match status" value="1"/>
</dbReference>
<dbReference type="PANTHER" id="PTHR30589">
    <property type="entry name" value="PROLIPOPROTEIN DIACYLGLYCERYL TRANSFERASE"/>
    <property type="match status" value="1"/>
</dbReference>
<dbReference type="Pfam" id="PF01790">
    <property type="entry name" value="LGT"/>
    <property type="match status" value="1"/>
</dbReference>
<dbReference type="PROSITE" id="PS01311">
    <property type="entry name" value="LGT"/>
    <property type="match status" value="1"/>
</dbReference>